<feature type="chain" id="PRO_1000142579" description="Large ribosomal subunit protein bL25">
    <location>
        <begin position="1"/>
        <end position="94"/>
    </location>
</feature>
<keyword id="KW-0687">Ribonucleoprotein</keyword>
<keyword id="KW-0689">Ribosomal protein</keyword>
<keyword id="KW-0694">RNA-binding</keyword>
<keyword id="KW-0699">rRNA-binding</keyword>
<accession>B7M535</accession>
<reference key="1">
    <citation type="journal article" date="2009" name="PLoS Genet.">
        <title>Organised genome dynamics in the Escherichia coli species results in highly diverse adaptive paths.</title>
        <authorList>
            <person name="Touchon M."/>
            <person name="Hoede C."/>
            <person name="Tenaillon O."/>
            <person name="Barbe V."/>
            <person name="Baeriswyl S."/>
            <person name="Bidet P."/>
            <person name="Bingen E."/>
            <person name="Bonacorsi S."/>
            <person name="Bouchier C."/>
            <person name="Bouvet O."/>
            <person name="Calteau A."/>
            <person name="Chiapello H."/>
            <person name="Clermont O."/>
            <person name="Cruveiller S."/>
            <person name="Danchin A."/>
            <person name="Diard M."/>
            <person name="Dossat C."/>
            <person name="Karoui M.E."/>
            <person name="Frapy E."/>
            <person name="Garry L."/>
            <person name="Ghigo J.M."/>
            <person name="Gilles A.M."/>
            <person name="Johnson J."/>
            <person name="Le Bouguenec C."/>
            <person name="Lescat M."/>
            <person name="Mangenot S."/>
            <person name="Martinez-Jehanne V."/>
            <person name="Matic I."/>
            <person name="Nassif X."/>
            <person name="Oztas S."/>
            <person name="Petit M.A."/>
            <person name="Pichon C."/>
            <person name="Rouy Z."/>
            <person name="Ruf C.S."/>
            <person name="Schneider D."/>
            <person name="Tourret J."/>
            <person name="Vacherie B."/>
            <person name="Vallenet D."/>
            <person name="Medigue C."/>
            <person name="Rocha E.P.C."/>
            <person name="Denamur E."/>
        </authorList>
    </citation>
    <scope>NUCLEOTIDE SEQUENCE [LARGE SCALE GENOMIC DNA]</scope>
    <source>
        <strain>IAI1</strain>
    </source>
</reference>
<protein>
    <recommendedName>
        <fullName evidence="1">Large ribosomal subunit protein bL25</fullName>
    </recommendedName>
    <alternativeName>
        <fullName evidence="2">50S ribosomal protein L25</fullName>
    </alternativeName>
</protein>
<evidence type="ECO:0000255" key="1">
    <source>
        <dbReference type="HAMAP-Rule" id="MF_01336"/>
    </source>
</evidence>
<evidence type="ECO:0000305" key="2"/>
<sequence>MFTINAEVRKEQGKGASRRLRAANKFPAIIYGGKEAPLAIELDHDKVMNMQAKAEFYSEVLTIVVDGKEIKVKAQDVQRHPYKPKLQHIDFVRA</sequence>
<dbReference type="EMBL" id="CU928160">
    <property type="protein sequence ID" value="CAQ99112.1"/>
    <property type="molecule type" value="Genomic_DNA"/>
</dbReference>
<dbReference type="RefSeq" id="WP_000494183.1">
    <property type="nucleotide sequence ID" value="NC_011741.1"/>
</dbReference>
<dbReference type="SMR" id="B7M535"/>
<dbReference type="GeneID" id="93774996"/>
<dbReference type="KEGG" id="ecr:ECIAI1_2267"/>
<dbReference type="HOGENOM" id="CLU_137946_0_0_6"/>
<dbReference type="GO" id="GO:0022625">
    <property type="term" value="C:cytosolic large ribosomal subunit"/>
    <property type="evidence" value="ECO:0007669"/>
    <property type="project" value="TreeGrafter"/>
</dbReference>
<dbReference type="GO" id="GO:0008097">
    <property type="term" value="F:5S rRNA binding"/>
    <property type="evidence" value="ECO:0007669"/>
    <property type="project" value="InterPro"/>
</dbReference>
<dbReference type="GO" id="GO:0003735">
    <property type="term" value="F:structural constituent of ribosome"/>
    <property type="evidence" value="ECO:0007669"/>
    <property type="project" value="InterPro"/>
</dbReference>
<dbReference type="GO" id="GO:0006412">
    <property type="term" value="P:translation"/>
    <property type="evidence" value="ECO:0007669"/>
    <property type="project" value="UniProtKB-UniRule"/>
</dbReference>
<dbReference type="CDD" id="cd00495">
    <property type="entry name" value="Ribosomal_L25_TL5_CTC"/>
    <property type="match status" value="1"/>
</dbReference>
<dbReference type="FunFam" id="2.40.240.10:FF:000002">
    <property type="entry name" value="50S ribosomal protein L25"/>
    <property type="match status" value="1"/>
</dbReference>
<dbReference type="Gene3D" id="2.40.240.10">
    <property type="entry name" value="Ribosomal Protein L25, Chain P"/>
    <property type="match status" value="1"/>
</dbReference>
<dbReference type="HAMAP" id="MF_01336">
    <property type="entry name" value="Ribosomal_bL25"/>
    <property type="match status" value="1"/>
</dbReference>
<dbReference type="InterPro" id="IPR020056">
    <property type="entry name" value="Rbsml_bL25/Gln-tRNA_synth_N"/>
</dbReference>
<dbReference type="InterPro" id="IPR011035">
    <property type="entry name" value="Ribosomal_bL25/Gln-tRNA_synth"/>
</dbReference>
<dbReference type="InterPro" id="IPR020055">
    <property type="entry name" value="Ribosomal_bL25_short"/>
</dbReference>
<dbReference type="InterPro" id="IPR029751">
    <property type="entry name" value="Ribosomal_L25_dom"/>
</dbReference>
<dbReference type="InterPro" id="IPR020930">
    <property type="entry name" value="Ribosomal_uL5_bac-type"/>
</dbReference>
<dbReference type="NCBIfam" id="NF004612">
    <property type="entry name" value="PRK05943.1"/>
    <property type="match status" value="1"/>
</dbReference>
<dbReference type="PANTHER" id="PTHR33284">
    <property type="entry name" value="RIBOSOMAL PROTEIN L25/GLN-TRNA SYNTHETASE, ANTI-CODON-BINDING DOMAIN-CONTAINING PROTEIN"/>
    <property type="match status" value="1"/>
</dbReference>
<dbReference type="PANTHER" id="PTHR33284:SF1">
    <property type="entry name" value="RIBOSOMAL PROTEIN L25_GLN-TRNA SYNTHETASE, ANTI-CODON-BINDING DOMAIN-CONTAINING PROTEIN"/>
    <property type="match status" value="1"/>
</dbReference>
<dbReference type="Pfam" id="PF01386">
    <property type="entry name" value="Ribosomal_L25p"/>
    <property type="match status" value="1"/>
</dbReference>
<dbReference type="SUPFAM" id="SSF50715">
    <property type="entry name" value="Ribosomal protein L25-like"/>
    <property type="match status" value="1"/>
</dbReference>
<organism>
    <name type="scientific">Escherichia coli O8 (strain IAI1)</name>
    <dbReference type="NCBI Taxonomy" id="585034"/>
    <lineage>
        <taxon>Bacteria</taxon>
        <taxon>Pseudomonadati</taxon>
        <taxon>Pseudomonadota</taxon>
        <taxon>Gammaproteobacteria</taxon>
        <taxon>Enterobacterales</taxon>
        <taxon>Enterobacteriaceae</taxon>
        <taxon>Escherichia</taxon>
    </lineage>
</organism>
<comment type="function">
    <text evidence="1">This is one of the proteins that binds to the 5S RNA in the ribosome where it forms part of the central protuberance.</text>
</comment>
<comment type="subunit">
    <text evidence="1">Part of the 50S ribosomal subunit; part of the 5S rRNA/L5/L18/L25 subcomplex. Contacts the 5S rRNA. Binds to the 5S rRNA independently of L5 and L18.</text>
</comment>
<comment type="similarity">
    <text evidence="1">Belongs to the bacterial ribosomal protein bL25 family.</text>
</comment>
<proteinExistence type="inferred from homology"/>
<gene>
    <name evidence="1" type="primary">rplY</name>
    <name type="ordered locus">ECIAI1_2267</name>
</gene>
<name>RL25_ECO8A</name>